<sequence>MKILVLNSGSSSIKFKLFEKDEALASGLVEKIGEQNSKIELKDLKSGQKYKKELAIKDHEQGIELVNELFAQSGILHDLNELDGCGHRIVHGGPNLTKHCLVDDEILKEIDRVAHIAPLHNPAHLIGIKTMIKAAPKVPNVTVFDTAFHQSMPDYAYMYALPYEFYEKHQVRKYGFHGTSHSYVSKQAAYILGKNINEFNAISAHLGNGASVCAIENGKCVDTSMGFTPLEGLIMGTRCGDIDPAVLPFLAKELNLNPSDLDTMMNKKSGVYGICGFNDFRDIEAQIEQNNEKARLALDMFCYRLSKYIGSYFAILPRVDALIFTAGIGENDDIVRAKVCQRLAHLGFDIDLDKNAQLRNGEISKKDSKIKILIVPTEEELEIAKITTELIKNK</sequence>
<feature type="chain" id="PRO_1000116795" description="Acetate kinase">
    <location>
        <begin position="1"/>
        <end position="394"/>
    </location>
</feature>
<feature type="active site" description="Proton donor/acceptor" evidence="1">
    <location>
        <position position="145"/>
    </location>
</feature>
<feature type="binding site" evidence="1">
    <location>
        <position position="7"/>
    </location>
    <ligand>
        <name>Mg(2+)</name>
        <dbReference type="ChEBI" id="CHEBI:18420"/>
    </ligand>
</feature>
<feature type="binding site" evidence="1">
    <location>
        <position position="14"/>
    </location>
    <ligand>
        <name>ATP</name>
        <dbReference type="ChEBI" id="CHEBI:30616"/>
    </ligand>
</feature>
<feature type="binding site" evidence="1">
    <location>
        <position position="88"/>
    </location>
    <ligand>
        <name>substrate</name>
    </ligand>
</feature>
<feature type="binding site" evidence="1">
    <location>
        <begin position="205"/>
        <end position="209"/>
    </location>
    <ligand>
        <name>ATP</name>
        <dbReference type="ChEBI" id="CHEBI:30616"/>
    </ligand>
</feature>
<feature type="binding site" evidence="1">
    <location>
        <begin position="279"/>
        <end position="281"/>
    </location>
    <ligand>
        <name>ATP</name>
        <dbReference type="ChEBI" id="CHEBI:30616"/>
    </ligand>
</feature>
<feature type="binding site" evidence="1">
    <location>
        <begin position="327"/>
        <end position="331"/>
    </location>
    <ligand>
        <name>ATP</name>
        <dbReference type="ChEBI" id="CHEBI:30616"/>
    </ligand>
</feature>
<feature type="binding site" evidence="1">
    <location>
        <position position="379"/>
    </location>
    <ligand>
        <name>Mg(2+)</name>
        <dbReference type="ChEBI" id="CHEBI:18420"/>
    </ligand>
</feature>
<feature type="site" description="Transition state stabilizer" evidence="1">
    <location>
        <position position="177"/>
    </location>
</feature>
<feature type="site" description="Transition state stabilizer" evidence="1">
    <location>
        <position position="238"/>
    </location>
</feature>
<comment type="function">
    <text evidence="1">Catalyzes the formation of acetyl phosphate from acetate and ATP. Can also catalyze the reverse reaction.</text>
</comment>
<comment type="catalytic activity">
    <reaction evidence="1">
        <text>acetate + ATP = acetyl phosphate + ADP</text>
        <dbReference type="Rhea" id="RHEA:11352"/>
        <dbReference type="ChEBI" id="CHEBI:22191"/>
        <dbReference type="ChEBI" id="CHEBI:30089"/>
        <dbReference type="ChEBI" id="CHEBI:30616"/>
        <dbReference type="ChEBI" id="CHEBI:456216"/>
        <dbReference type="EC" id="2.7.2.1"/>
    </reaction>
</comment>
<comment type="cofactor">
    <cofactor evidence="1">
        <name>Mg(2+)</name>
        <dbReference type="ChEBI" id="CHEBI:18420"/>
    </cofactor>
    <cofactor evidence="1">
        <name>Mn(2+)</name>
        <dbReference type="ChEBI" id="CHEBI:29035"/>
    </cofactor>
    <text evidence="1">Mg(2+). Can also accept Mn(2+).</text>
</comment>
<comment type="pathway">
    <text evidence="1">Metabolic intermediate biosynthesis; acetyl-CoA biosynthesis; acetyl-CoA from acetate: step 1/2.</text>
</comment>
<comment type="subunit">
    <text evidence="1">Homodimer.</text>
</comment>
<comment type="subcellular location">
    <subcellularLocation>
        <location evidence="1">Cytoplasm</location>
    </subcellularLocation>
</comment>
<comment type="similarity">
    <text evidence="1">Belongs to the acetokinase family.</text>
</comment>
<protein>
    <recommendedName>
        <fullName evidence="1">Acetate kinase</fullName>
        <ecNumber evidence="1">2.7.2.1</ecNumber>
    </recommendedName>
    <alternativeName>
        <fullName evidence="1">Acetokinase</fullName>
    </alternativeName>
</protein>
<dbReference type="EC" id="2.7.2.1" evidence="1"/>
<dbReference type="EMBL" id="CP000932">
    <property type="protein sequence ID" value="ACM63969.1"/>
    <property type="molecule type" value="Genomic_DNA"/>
</dbReference>
<dbReference type="RefSeq" id="WP_012661352.1">
    <property type="nucleotide sequence ID" value="NC_012039.1"/>
</dbReference>
<dbReference type="SMR" id="B9KFY4"/>
<dbReference type="STRING" id="306263.Cla_0640"/>
<dbReference type="KEGG" id="cla:CLA_0640"/>
<dbReference type="PATRIC" id="fig|306263.5.peg.620"/>
<dbReference type="eggNOG" id="COG0282">
    <property type="taxonomic scope" value="Bacteria"/>
</dbReference>
<dbReference type="HOGENOM" id="CLU_020352_0_1_7"/>
<dbReference type="UniPathway" id="UPA00340">
    <property type="reaction ID" value="UER00458"/>
</dbReference>
<dbReference type="Proteomes" id="UP000007727">
    <property type="component" value="Chromosome"/>
</dbReference>
<dbReference type="GO" id="GO:0005737">
    <property type="term" value="C:cytoplasm"/>
    <property type="evidence" value="ECO:0007669"/>
    <property type="project" value="UniProtKB-SubCell"/>
</dbReference>
<dbReference type="GO" id="GO:0008776">
    <property type="term" value="F:acetate kinase activity"/>
    <property type="evidence" value="ECO:0007669"/>
    <property type="project" value="UniProtKB-UniRule"/>
</dbReference>
<dbReference type="GO" id="GO:0005524">
    <property type="term" value="F:ATP binding"/>
    <property type="evidence" value="ECO:0007669"/>
    <property type="project" value="UniProtKB-KW"/>
</dbReference>
<dbReference type="GO" id="GO:0000287">
    <property type="term" value="F:magnesium ion binding"/>
    <property type="evidence" value="ECO:0007669"/>
    <property type="project" value="UniProtKB-UniRule"/>
</dbReference>
<dbReference type="GO" id="GO:0006083">
    <property type="term" value="P:acetate metabolic process"/>
    <property type="evidence" value="ECO:0007669"/>
    <property type="project" value="TreeGrafter"/>
</dbReference>
<dbReference type="GO" id="GO:0006085">
    <property type="term" value="P:acetyl-CoA biosynthetic process"/>
    <property type="evidence" value="ECO:0007669"/>
    <property type="project" value="UniProtKB-UniRule"/>
</dbReference>
<dbReference type="CDD" id="cd24010">
    <property type="entry name" value="ASKHA_NBD_AcK_PK"/>
    <property type="match status" value="1"/>
</dbReference>
<dbReference type="Gene3D" id="3.30.420.40">
    <property type="match status" value="2"/>
</dbReference>
<dbReference type="HAMAP" id="MF_00020">
    <property type="entry name" value="Acetate_kinase"/>
    <property type="match status" value="1"/>
</dbReference>
<dbReference type="InterPro" id="IPR004372">
    <property type="entry name" value="Ac/propionate_kinase"/>
</dbReference>
<dbReference type="InterPro" id="IPR000890">
    <property type="entry name" value="Aliphatic_acid_kin_short-chain"/>
</dbReference>
<dbReference type="InterPro" id="IPR023865">
    <property type="entry name" value="Aliphatic_acid_kinase_CS"/>
</dbReference>
<dbReference type="InterPro" id="IPR043129">
    <property type="entry name" value="ATPase_NBD"/>
</dbReference>
<dbReference type="NCBIfam" id="TIGR00016">
    <property type="entry name" value="ackA"/>
    <property type="match status" value="1"/>
</dbReference>
<dbReference type="PANTHER" id="PTHR21060">
    <property type="entry name" value="ACETATE KINASE"/>
    <property type="match status" value="1"/>
</dbReference>
<dbReference type="PANTHER" id="PTHR21060:SF15">
    <property type="entry name" value="ACETATE KINASE-RELATED"/>
    <property type="match status" value="1"/>
</dbReference>
<dbReference type="Pfam" id="PF00871">
    <property type="entry name" value="Acetate_kinase"/>
    <property type="match status" value="1"/>
</dbReference>
<dbReference type="PIRSF" id="PIRSF000722">
    <property type="entry name" value="Acetate_prop_kin"/>
    <property type="match status" value="1"/>
</dbReference>
<dbReference type="PRINTS" id="PR00471">
    <property type="entry name" value="ACETATEKNASE"/>
</dbReference>
<dbReference type="SUPFAM" id="SSF53067">
    <property type="entry name" value="Actin-like ATPase domain"/>
    <property type="match status" value="2"/>
</dbReference>
<dbReference type="PROSITE" id="PS01075">
    <property type="entry name" value="ACETATE_KINASE_1"/>
    <property type="match status" value="1"/>
</dbReference>
<dbReference type="PROSITE" id="PS01076">
    <property type="entry name" value="ACETATE_KINASE_2"/>
    <property type="match status" value="1"/>
</dbReference>
<reference key="1">
    <citation type="journal article" date="2008" name="Foodborne Pathog. Dis.">
        <title>The complete genome sequence and analysis of the human pathogen Campylobacter lari.</title>
        <authorList>
            <person name="Miller W.G."/>
            <person name="Wang G."/>
            <person name="Binnewies T.T."/>
            <person name="Parker C.T."/>
        </authorList>
    </citation>
    <scope>NUCLEOTIDE SEQUENCE [LARGE SCALE GENOMIC DNA]</scope>
    <source>
        <strain>RM2100 / D67 / ATCC BAA-1060</strain>
    </source>
</reference>
<gene>
    <name evidence="1" type="primary">ackA</name>
    <name type="ordered locus">Cla_0640</name>
</gene>
<keyword id="KW-0067">ATP-binding</keyword>
<keyword id="KW-0963">Cytoplasm</keyword>
<keyword id="KW-0418">Kinase</keyword>
<keyword id="KW-0460">Magnesium</keyword>
<keyword id="KW-0479">Metal-binding</keyword>
<keyword id="KW-0547">Nucleotide-binding</keyword>
<keyword id="KW-1185">Reference proteome</keyword>
<keyword id="KW-0808">Transferase</keyword>
<name>ACKA_CAMLR</name>
<proteinExistence type="inferred from homology"/>
<accession>B9KFY4</accession>
<organism>
    <name type="scientific">Campylobacter lari (strain RM2100 / D67 / ATCC BAA-1060)</name>
    <dbReference type="NCBI Taxonomy" id="306263"/>
    <lineage>
        <taxon>Bacteria</taxon>
        <taxon>Pseudomonadati</taxon>
        <taxon>Campylobacterota</taxon>
        <taxon>Epsilonproteobacteria</taxon>
        <taxon>Campylobacterales</taxon>
        <taxon>Campylobacteraceae</taxon>
        <taxon>Campylobacter</taxon>
    </lineage>
</organism>
<evidence type="ECO:0000255" key="1">
    <source>
        <dbReference type="HAMAP-Rule" id="MF_00020"/>
    </source>
</evidence>